<gene>
    <name evidence="1" type="primary">rpsC</name>
    <name type="ordered locus">GM21_3322</name>
</gene>
<dbReference type="EMBL" id="CP001661">
    <property type="protein sequence ID" value="ACT19347.1"/>
    <property type="molecule type" value="Genomic_DNA"/>
</dbReference>
<dbReference type="SMR" id="C6E4Q1"/>
<dbReference type="STRING" id="443144.GM21_3322"/>
<dbReference type="KEGG" id="gem:GM21_3322"/>
<dbReference type="eggNOG" id="COG0092">
    <property type="taxonomic scope" value="Bacteria"/>
</dbReference>
<dbReference type="HOGENOM" id="CLU_058591_0_2_7"/>
<dbReference type="OrthoDB" id="9806396at2"/>
<dbReference type="GO" id="GO:0022627">
    <property type="term" value="C:cytosolic small ribosomal subunit"/>
    <property type="evidence" value="ECO:0007669"/>
    <property type="project" value="TreeGrafter"/>
</dbReference>
<dbReference type="GO" id="GO:0003729">
    <property type="term" value="F:mRNA binding"/>
    <property type="evidence" value="ECO:0007669"/>
    <property type="project" value="UniProtKB-UniRule"/>
</dbReference>
<dbReference type="GO" id="GO:0019843">
    <property type="term" value="F:rRNA binding"/>
    <property type="evidence" value="ECO:0007669"/>
    <property type="project" value="UniProtKB-UniRule"/>
</dbReference>
<dbReference type="GO" id="GO:0003735">
    <property type="term" value="F:structural constituent of ribosome"/>
    <property type="evidence" value="ECO:0007669"/>
    <property type="project" value="InterPro"/>
</dbReference>
<dbReference type="GO" id="GO:0006412">
    <property type="term" value="P:translation"/>
    <property type="evidence" value="ECO:0007669"/>
    <property type="project" value="UniProtKB-UniRule"/>
</dbReference>
<dbReference type="CDD" id="cd02412">
    <property type="entry name" value="KH-II_30S_S3"/>
    <property type="match status" value="1"/>
</dbReference>
<dbReference type="FunFam" id="3.30.1140.32:FF:000009">
    <property type="entry name" value="30S ribosomal protein S3"/>
    <property type="match status" value="1"/>
</dbReference>
<dbReference type="FunFam" id="3.30.300.20:FF:000001">
    <property type="entry name" value="30S ribosomal protein S3"/>
    <property type="match status" value="1"/>
</dbReference>
<dbReference type="Gene3D" id="3.30.300.20">
    <property type="match status" value="1"/>
</dbReference>
<dbReference type="Gene3D" id="3.30.1140.32">
    <property type="entry name" value="Ribosomal protein S3, C-terminal domain"/>
    <property type="match status" value="1"/>
</dbReference>
<dbReference type="HAMAP" id="MF_01309_B">
    <property type="entry name" value="Ribosomal_uS3_B"/>
    <property type="match status" value="1"/>
</dbReference>
<dbReference type="InterPro" id="IPR004087">
    <property type="entry name" value="KH_dom"/>
</dbReference>
<dbReference type="InterPro" id="IPR015946">
    <property type="entry name" value="KH_dom-like_a/b"/>
</dbReference>
<dbReference type="InterPro" id="IPR004044">
    <property type="entry name" value="KH_dom_type_2"/>
</dbReference>
<dbReference type="InterPro" id="IPR009019">
    <property type="entry name" value="KH_sf_prok-type"/>
</dbReference>
<dbReference type="InterPro" id="IPR036419">
    <property type="entry name" value="Ribosomal_S3_C_sf"/>
</dbReference>
<dbReference type="InterPro" id="IPR005704">
    <property type="entry name" value="Ribosomal_uS3_bac-typ"/>
</dbReference>
<dbReference type="InterPro" id="IPR001351">
    <property type="entry name" value="Ribosomal_uS3_C"/>
</dbReference>
<dbReference type="InterPro" id="IPR018280">
    <property type="entry name" value="Ribosomal_uS3_CS"/>
</dbReference>
<dbReference type="NCBIfam" id="TIGR01009">
    <property type="entry name" value="rpsC_bact"/>
    <property type="match status" value="1"/>
</dbReference>
<dbReference type="PANTHER" id="PTHR11760">
    <property type="entry name" value="30S/40S RIBOSOMAL PROTEIN S3"/>
    <property type="match status" value="1"/>
</dbReference>
<dbReference type="PANTHER" id="PTHR11760:SF19">
    <property type="entry name" value="SMALL RIBOSOMAL SUBUNIT PROTEIN US3C"/>
    <property type="match status" value="1"/>
</dbReference>
<dbReference type="Pfam" id="PF07650">
    <property type="entry name" value="KH_2"/>
    <property type="match status" value="1"/>
</dbReference>
<dbReference type="Pfam" id="PF00189">
    <property type="entry name" value="Ribosomal_S3_C"/>
    <property type="match status" value="1"/>
</dbReference>
<dbReference type="SMART" id="SM00322">
    <property type="entry name" value="KH"/>
    <property type="match status" value="1"/>
</dbReference>
<dbReference type="SUPFAM" id="SSF54814">
    <property type="entry name" value="Prokaryotic type KH domain (KH-domain type II)"/>
    <property type="match status" value="1"/>
</dbReference>
<dbReference type="SUPFAM" id="SSF54821">
    <property type="entry name" value="Ribosomal protein S3 C-terminal domain"/>
    <property type="match status" value="1"/>
</dbReference>
<dbReference type="PROSITE" id="PS50823">
    <property type="entry name" value="KH_TYPE_2"/>
    <property type="match status" value="1"/>
</dbReference>
<dbReference type="PROSITE" id="PS00548">
    <property type="entry name" value="RIBOSOMAL_S3"/>
    <property type="match status" value="1"/>
</dbReference>
<organism>
    <name type="scientific">Geobacter sp. (strain M21)</name>
    <dbReference type="NCBI Taxonomy" id="443144"/>
    <lineage>
        <taxon>Bacteria</taxon>
        <taxon>Pseudomonadati</taxon>
        <taxon>Thermodesulfobacteriota</taxon>
        <taxon>Desulfuromonadia</taxon>
        <taxon>Geobacterales</taxon>
        <taxon>Geobacteraceae</taxon>
        <taxon>Geobacter</taxon>
    </lineage>
</organism>
<sequence length="211" mass="23912">MGQKVNPIGFRLGVIKTWDSKWYAEKDYAKLLHEDLKLRNFLKKRLYHSGVSKIEIERAAGKAKINIFTARPGLIIGKKGSEVETLKKELAKLTEKEVYLNIQEVRKPELDAQLVAENVAMQLERRIAFRRAMKKSVTSTLKFGAKGIRITCSGRLGGAEMSRTEWYREGRVPLHTLRADIDYGFAEAKTTYGIIGVKVLLFKGEVLSAKK</sequence>
<name>RS3_GEOSM</name>
<keyword id="KW-0687">Ribonucleoprotein</keyword>
<keyword id="KW-0689">Ribosomal protein</keyword>
<keyword id="KW-0694">RNA-binding</keyword>
<keyword id="KW-0699">rRNA-binding</keyword>
<feature type="chain" id="PRO_1000214341" description="Small ribosomal subunit protein uS3">
    <location>
        <begin position="1"/>
        <end position="211"/>
    </location>
</feature>
<feature type="domain" description="KH type-2" evidence="1">
    <location>
        <begin position="38"/>
        <end position="106"/>
    </location>
</feature>
<accession>C6E4Q1</accession>
<reference key="1">
    <citation type="submission" date="2009-07" db="EMBL/GenBank/DDBJ databases">
        <title>Complete sequence of Geobacter sp. M21.</title>
        <authorList>
            <consortium name="US DOE Joint Genome Institute"/>
            <person name="Lucas S."/>
            <person name="Copeland A."/>
            <person name="Lapidus A."/>
            <person name="Glavina del Rio T."/>
            <person name="Dalin E."/>
            <person name="Tice H."/>
            <person name="Bruce D."/>
            <person name="Goodwin L."/>
            <person name="Pitluck S."/>
            <person name="Saunders E."/>
            <person name="Brettin T."/>
            <person name="Detter J.C."/>
            <person name="Han C."/>
            <person name="Larimer F."/>
            <person name="Land M."/>
            <person name="Hauser L."/>
            <person name="Kyrpides N."/>
            <person name="Ovchinnikova G."/>
            <person name="Lovley D."/>
        </authorList>
    </citation>
    <scope>NUCLEOTIDE SEQUENCE [LARGE SCALE GENOMIC DNA]</scope>
    <source>
        <strain>M21</strain>
    </source>
</reference>
<comment type="function">
    <text evidence="1">Binds the lower part of the 30S subunit head. Binds mRNA in the 70S ribosome, positioning it for translation.</text>
</comment>
<comment type="subunit">
    <text evidence="1">Part of the 30S ribosomal subunit. Forms a tight complex with proteins S10 and S14.</text>
</comment>
<comment type="similarity">
    <text evidence="1">Belongs to the universal ribosomal protein uS3 family.</text>
</comment>
<protein>
    <recommendedName>
        <fullName evidence="1">Small ribosomal subunit protein uS3</fullName>
    </recommendedName>
    <alternativeName>
        <fullName evidence="2">30S ribosomal protein S3</fullName>
    </alternativeName>
</protein>
<proteinExistence type="inferred from homology"/>
<evidence type="ECO:0000255" key="1">
    <source>
        <dbReference type="HAMAP-Rule" id="MF_01309"/>
    </source>
</evidence>
<evidence type="ECO:0000305" key="2"/>